<sequence>MESGFKVTLKDAIRTIPDYPKPGVQFRDVTTLMGNAQAFRRAVDELVYPYAGNRIDKVAGIEARGFILGGAIAHQLSAGFVPIRKKGKLPRDTVRIAYSLEYGVDEMEMHRDAIEKGERVVLVDDLIATGGTAEAAAKLLLQMGAEIVAACFIIDLPDLGGRKKLEALGLPVRTLVAFEGD</sequence>
<feature type="chain" id="PRO_1000000263" description="Adenine phosphoribosyltransferase">
    <location>
        <begin position="1"/>
        <end position="181"/>
    </location>
</feature>
<dbReference type="EC" id="2.4.2.7" evidence="1"/>
<dbReference type="EMBL" id="CP000708">
    <property type="protein sequence ID" value="ABQ60340.1"/>
    <property type="molecule type" value="Genomic_DNA"/>
</dbReference>
<dbReference type="RefSeq" id="WP_002964645.1">
    <property type="nucleotide sequence ID" value="NC_009505.1"/>
</dbReference>
<dbReference type="SMR" id="A5VRR9"/>
<dbReference type="KEGG" id="bov:BOV_1489"/>
<dbReference type="HOGENOM" id="CLU_063339_3_0_5"/>
<dbReference type="PhylomeDB" id="A5VRR9"/>
<dbReference type="UniPathway" id="UPA00588">
    <property type="reaction ID" value="UER00646"/>
</dbReference>
<dbReference type="Proteomes" id="UP000006383">
    <property type="component" value="Chromosome I"/>
</dbReference>
<dbReference type="GO" id="GO:0005737">
    <property type="term" value="C:cytoplasm"/>
    <property type="evidence" value="ECO:0007669"/>
    <property type="project" value="UniProtKB-SubCell"/>
</dbReference>
<dbReference type="GO" id="GO:0002055">
    <property type="term" value="F:adenine binding"/>
    <property type="evidence" value="ECO:0007669"/>
    <property type="project" value="TreeGrafter"/>
</dbReference>
<dbReference type="GO" id="GO:0003999">
    <property type="term" value="F:adenine phosphoribosyltransferase activity"/>
    <property type="evidence" value="ECO:0007669"/>
    <property type="project" value="UniProtKB-UniRule"/>
</dbReference>
<dbReference type="GO" id="GO:0016208">
    <property type="term" value="F:AMP binding"/>
    <property type="evidence" value="ECO:0007669"/>
    <property type="project" value="TreeGrafter"/>
</dbReference>
<dbReference type="GO" id="GO:0006168">
    <property type="term" value="P:adenine salvage"/>
    <property type="evidence" value="ECO:0007669"/>
    <property type="project" value="InterPro"/>
</dbReference>
<dbReference type="GO" id="GO:0044209">
    <property type="term" value="P:AMP salvage"/>
    <property type="evidence" value="ECO:0007669"/>
    <property type="project" value="UniProtKB-UniRule"/>
</dbReference>
<dbReference type="GO" id="GO:0006166">
    <property type="term" value="P:purine ribonucleoside salvage"/>
    <property type="evidence" value="ECO:0007669"/>
    <property type="project" value="UniProtKB-KW"/>
</dbReference>
<dbReference type="CDD" id="cd06223">
    <property type="entry name" value="PRTases_typeI"/>
    <property type="match status" value="1"/>
</dbReference>
<dbReference type="FunFam" id="3.40.50.2020:FF:000021">
    <property type="entry name" value="Adenine phosphoribosyltransferase"/>
    <property type="match status" value="1"/>
</dbReference>
<dbReference type="Gene3D" id="3.40.50.2020">
    <property type="match status" value="1"/>
</dbReference>
<dbReference type="HAMAP" id="MF_00004">
    <property type="entry name" value="Aden_phosphoribosyltr"/>
    <property type="match status" value="1"/>
</dbReference>
<dbReference type="InterPro" id="IPR005764">
    <property type="entry name" value="Ade_phspho_trans"/>
</dbReference>
<dbReference type="InterPro" id="IPR000836">
    <property type="entry name" value="PRibTrfase_dom"/>
</dbReference>
<dbReference type="InterPro" id="IPR029057">
    <property type="entry name" value="PRTase-like"/>
</dbReference>
<dbReference type="InterPro" id="IPR050054">
    <property type="entry name" value="UPRTase/APRTase"/>
</dbReference>
<dbReference type="NCBIfam" id="TIGR01090">
    <property type="entry name" value="apt"/>
    <property type="match status" value="1"/>
</dbReference>
<dbReference type="NCBIfam" id="NF002634">
    <property type="entry name" value="PRK02304.1-3"/>
    <property type="match status" value="1"/>
</dbReference>
<dbReference type="NCBIfam" id="NF002636">
    <property type="entry name" value="PRK02304.1-5"/>
    <property type="match status" value="1"/>
</dbReference>
<dbReference type="PANTHER" id="PTHR32315">
    <property type="entry name" value="ADENINE PHOSPHORIBOSYLTRANSFERASE"/>
    <property type="match status" value="1"/>
</dbReference>
<dbReference type="PANTHER" id="PTHR32315:SF3">
    <property type="entry name" value="ADENINE PHOSPHORIBOSYLTRANSFERASE"/>
    <property type="match status" value="1"/>
</dbReference>
<dbReference type="Pfam" id="PF00156">
    <property type="entry name" value="Pribosyltran"/>
    <property type="match status" value="1"/>
</dbReference>
<dbReference type="SUPFAM" id="SSF53271">
    <property type="entry name" value="PRTase-like"/>
    <property type="match status" value="1"/>
</dbReference>
<dbReference type="PROSITE" id="PS00103">
    <property type="entry name" value="PUR_PYR_PR_TRANSFER"/>
    <property type="match status" value="1"/>
</dbReference>
<gene>
    <name evidence="1" type="primary">apt</name>
    <name type="ordered locus">BOV_1489</name>
</gene>
<accession>A5VRR9</accession>
<comment type="function">
    <text evidence="1">Catalyzes a salvage reaction resulting in the formation of AMP, that is energically less costly than de novo synthesis.</text>
</comment>
<comment type="catalytic activity">
    <reaction evidence="1">
        <text>AMP + diphosphate = 5-phospho-alpha-D-ribose 1-diphosphate + adenine</text>
        <dbReference type="Rhea" id="RHEA:16609"/>
        <dbReference type="ChEBI" id="CHEBI:16708"/>
        <dbReference type="ChEBI" id="CHEBI:33019"/>
        <dbReference type="ChEBI" id="CHEBI:58017"/>
        <dbReference type="ChEBI" id="CHEBI:456215"/>
        <dbReference type="EC" id="2.4.2.7"/>
    </reaction>
</comment>
<comment type="pathway">
    <text evidence="1">Purine metabolism; AMP biosynthesis via salvage pathway; AMP from adenine: step 1/1.</text>
</comment>
<comment type="subunit">
    <text evidence="1">Homodimer.</text>
</comment>
<comment type="subcellular location">
    <subcellularLocation>
        <location evidence="1">Cytoplasm</location>
    </subcellularLocation>
</comment>
<comment type="similarity">
    <text evidence="1">Belongs to the purine/pyrimidine phosphoribosyltransferase family.</text>
</comment>
<proteinExistence type="inferred from homology"/>
<organism>
    <name type="scientific">Brucella ovis (strain ATCC 25840 / 63/290 / NCTC 10512)</name>
    <dbReference type="NCBI Taxonomy" id="444178"/>
    <lineage>
        <taxon>Bacteria</taxon>
        <taxon>Pseudomonadati</taxon>
        <taxon>Pseudomonadota</taxon>
        <taxon>Alphaproteobacteria</taxon>
        <taxon>Hyphomicrobiales</taxon>
        <taxon>Brucellaceae</taxon>
        <taxon>Brucella/Ochrobactrum group</taxon>
        <taxon>Brucella</taxon>
    </lineage>
</organism>
<protein>
    <recommendedName>
        <fullName evidence="1">Adenine phosphoribosyltransferase</fullName>
        <shortName evidence="1">APRT</shortName>
        <ecNumber evidence="1">2.4.2.7</ecNumber>
    </recommendedName>
</protein>
<evidence type="ECO:0000255" key="1">
    <source>
        <dbReference type="HAMAP-Rule" id="MF_00004"/>
    </source>
</evidence>
<reference key="1">
    <citation type="journal article" date="2009" name="PLoS ONE">
        <title>Genome degradation in Brucella ovis corresponds with narrowing of its host range and tissue tropism.</title>
        <authorList>
            <person name="Tsolis R.M."/>
            <person name="Seshadri R."/>
            <person name="Santos R.L."/>
            <person name="Sangari F.J."/>
            <person name="Lobo J.M."/>
            <person name="de Jong M.F."/>
            <person name="Ren Q."/>
            <person name="Myers G."/>
            <person name="Brinkac L.M."/>
            <person name="Nelson W.C."/>
            <person name="Deboy R.T."/>
            <person name="Angiuoli S."/>
            <person name="Khouri H."/>
            <person name="Dimitrov G."/>
            <person name="Robinson J.R."/>
            <person name="Mulligan S."/>
            <person name="Walker R.L."/>
            <person name="Elzer P.E."/>
            <person name="Hassan K.A."/>
            <person name="Paulsen I.T."/>
        </authorList>
    </citation>
    <scope>NUCLEOTIDE SEQUENCE [LARGE SCALE GENOMIC DNA]</scope>
    <source>
        <strain>ATCC 25840 / 63/290 / NCTC 10512</strain>
    </source>
</reference>
<keyword id="KW-0963">Cytoplasm</keyword>
<keyword id="KW-0328">Glycosyltransferase</keyword>
<keyword id="KW-0660">Purine salvage</keyword>
<keyword id="KW-0808">Transferase</keyword>
<name>APT_BRUO2</name>